<organism>
    <name type="scientific">Pyropia yezoensis</name>
    <name type="common">Susabi-nori</name>
    <name type="synonym">Porphyra yezoensis</name>
    <dbReference type="NCBI Taxonomy" id="2788"/>
    <lineage>
        <taxon>Eukaryota</taxon>
        <taxon>Rhodophyta</taxon>
        <taxon>Bangiophyceae</taxon>
        <taxon>Bangiales</taxon>
        <taxon>Bangiaceae</taxon>
        <taxon>Pyropia</taxon>
    </lineage>
</organism>
<protein>
    <recommendedName>
        <fullName>Allophycocyanin alpha-B chain</fullName>
    </recommendedName>
    <alternativeName>
        <fullName>Allophycocyanin gamma chain</fullName>
    </alternativeName>
</protein>
<sequence length="161" mass="18103">MSLVTQIIVNADDELRYPTIGELQSIQDYLTTGSNRIRIATIIRDKEKEIIQKASKQIFQLHPEYIAPGGNAAGSRKRSLCLRDYGWYLRLITYGVLAGDKDSIETIGIIGVREMYNSLGVPIIGMLDAIQCLKEASLEMLGQDDIRIISPYFDYIIRGMS</sequence>
<gene>
    <name type="primary">apcD</name>
</gene>
<feature type="chain" id="PRO_0000277332" description="Allophycocyanin alpha-B chain">
    <location>
        <begin position="1"/>
        <end position="161"/>
    </location>
</feature>
<feature type="binding site" description="covalent" evidence="1">
    <location>
        <position position="81"/>
    </location>
    <ligand>
        <name>(2R,3E)-phycocyanobilin</name>
        <dbReference type="ChEBI" id="CHEBI:85275"/>
    </ligand>
</feature>
<feature type="modified residue" description="N4-methylasparagine" evidence="1">
    <location>
        <position position="71"/>
    </location>
</feature>
<dbReference type="EMBL" id="AP006715">
    <property type="protein sequence ID" value="BAE92319.1"/>
    <property type="molecule type" value="Genomic_DNA"/>
</dbReference>
<dbReference type="RefSeq" id="YP_536876.1">
    <property type="nucleotide sequence ID" value="NC_007932.1"/>
</dbReference>
<dbReference type="SMR" id="Q1XDU2"/>
<dbReference type="GeneID" id="3978829"/>
<dbReference type="GO" id="GO:0009535">
    <property type="term" value="C:chloroplast thylakoid membrane"/>
    <property type="evidence" value="ECO:0007669"/>
    <property type="project" value="UniProtKB-SubCell"/>
</dbReference>
<dbReference type="GO" id="GO:0030089">
    <property type="term" value="C:phycobilisome"/>
    <property type="evidence" value="ECO:0007669"/>
    <property type="project" value="UniProtKB-KW"/>
</dbReference>
<dbReference type="GO" id="GO:0015979">
    <property type="term" value="P:photosynthesis"/>
    <property type="evidence" value="ECO:0007669"/>
    <property type="project" value="UniProtKB-KW"/>
</dbReference>
<dbReference type="CDD" id="cd12125">
    <property type="entry name" value="APC_alpha"/>
    <property type="match status" value="1"/>
</dbReference>
<dbReference type="Gene3D" id="1.10.490.20">
    <property type="entry name" value="Phycocyanins"/>
    <property type="match status" value="1"/>
</dbReference>
<dbReference type="InterPro" id="IPR009050">
    <property type="entry name" value="Globin-like_sf"/>
</dbReference>
<dbReference type="InterPro" id="IPR012128">
    <property type="entry name" value="Phycobilisome_asu/bsu"/>
</dbReference>
<dbReference type="InterPro" id="IPR038719">
    <property type="entry name" value="Phycobilisome_asu/bsu_sf"/>
</dbReference>
<dbReference type="PANTHER" id="PTHR34011:SF2">
    <property type="entry name" value="ALLOPHYCOCYANIN ALPHA CHAIN"/>
    <property type="match status" value="1"/>
</dbReference>
<dbReference type="PANTHER" id="PTHR34011">
    <property type="entry name" value="PHYCOBILISOME 32.1 KDA LINKER POLYPEPTIDE, PHYCOCYANIN-ASSOCIATED, ROD 2-RELATED"/>
    <property type="match status" value="1"/>
</dbReference>
<dbReference type="Pfam" id="PF00502">
    <property type="entry name" value="Phycobilisome"/>
    <property type="match status" value="1"/>
</dbReference>
<dbReference type="PIRSF" id="PIRSF000081">
    <property type="entry name" value="Phycocyanin"/>
    <property type="match status" value="1"/>
</dbReference>
<dbReference type="SUPFAM" id="SSF46458">
    <property type="entry name" value="Globin-like"/>
    <property type="match status" value="1"/>
</dbReference>
<keyword id="KW-0042">Antenna complex</keyword>
<keyword id="KW-0089">Bile pigment</keyword>
<keyword id="KW-0150">Chloroplast</keyword>
<keyword id="KW-0157">Chromophore</keyword>
<keyword id="KW-0249">Electron transport</keyword>
<keyword id="KW-0472">Membrane</keyword>
<keyword id="KW-0488">Methylation</keyword>
<keyword id="KW-0602">Photosynthesis</keyword>
<keyword id="KW-0605">Phycobilisome</keyword>
<keyword id="KW-0934">Plastid</keyword>
<keyword id="KW-0793">Thylakoid</keyword>
<keyword id="KW-0813">Transport</keyword>
<name>APCD_PYRYE</name>
<comment type="function">
    <text evidence="1">Allophycocyanin is a photosynthetic bile pigment-protein complex with maximum absorption at approximately 650 nanometers.</text>
</comment>
<comment type="subcellular location">
    <subcellularLocation>
        <location evidence="1">Plastid</location>
        <location evidence="1">Chloroplast thylakoid membrane</location>
        <topology evidence="1">Peripheral membrane protein</topology>
        <orientation evidence="1">Stromal side</orientation>
    </subcellularLocation>
    <text evidence="1">Forms the core of the phycobilisome.</text>
</comment>
<comment type="PTM">
    <text evidence="1">Contains one covalently linked bilin chromophore.</text>
</comment>
<comment type="similarity">
    <text evidence="2">Belongs to the phycobiliprotein family.</text>
</comment>
<proteinExistence type="inferred from homology"/>
<reference key="1">
    <citation type="submission" date="2003-11" db="EMBL/GenBank/DDBJ databases">
        <title>Whole genome sequence of Porphyra yezoensis chloroplast.</title>
        <authorList>
            <person name="Kunimoto M."/>
            <person name="Morishima K."/>
            <person name="Yoshikawa M."/>
            <person name="Fukuda S."/>
            <person name="Kobayashi T."/>
            <person name="Kobayashi M."/>
            <person name="Okazaki T."/>
            <person name="Ohara I."/>
            <person name="Nakayama I."/>
        </authorList>
    </citation>
    <scope>NUCLEOTIDE SEQUENCE [LARGE SCALE GENOMIC DNA]</scope>
    <source>
        <strain>U-51</strain>
    </source>
</reference>
<geneLocation type="chloroplast"/>
<evidence type="ECO:0000250" key="1"/>
<evidence type="ECO:0000305" key="2"/>
<accession>Q1XDU2</accession>